<feature type="chain" id="PRO_0000101328" description="Uncharacterized protein RP188">
    <location>
        <begin position="1"/>
        <end position="157"/>
    </location>
</feature>
<organism>
    <name type="scientific">Rickettsia prowazekii (strain Madrid E)</name>
    <dbReference type="NCBI Taxonomy" id="272947"/>
    <lineage>
        <taxon>Bacteria</taxon>
        <taxon>Pseudomonadati</taxon>
        <taxon>Pseudomonadota</taxon>
        <taxon>Alphaproteobacteria</taxon>
        <taxon>Rickettsiales</taxon>
        <taxon>Rickettsiaceae</taxon>
        <taxon>Rickettsieae</taxon>
        <taxon>Rickettsia</taxon>
        <taxon>typhus group</taxon>
    </lineage>
</organism>
<dbReference type="EMBL" id="AJ235270">
    <property type="protein sequence ID" value="CAA14654.1"/>
    <property type="molecule type" value="Genomic_DNA"/>
</dbReference>
<dbReference type="PIR" id="G71729">
    <property type="entry name" value="G71729"/>
</dbReference>
<dbReference type="RefSeq" id="NP_220577.1">
    <property type="nucleotide sequence ID" value="NC_000963.1"/>
</dbReference>
<dbReference type="RefSeq" id="WP_004598601.1">
    <property type="nucleotide sequence ID" value="NC_000963.1"/>
</dbReference>
<dbReference type="SMR" id="Q9ZDX6"/>
<dbReference type="STRING" id="272947.gene:17555270"/>
<dbReference type="EnsemblBacteria" id="CAA14654">
    <property type="protein sequence ID" value="CAA14654"/>
    <property type="gene ID" value="CAA14654"/>
</dbReference>
<dbReference type="KEGG" id="rpr:RP188"/>
<dbReference type="PATRIC" id="fig|272947.5.peg.195"/>
<dbReference type="eggNOG" id="COG5468">
    <property type="taxonomic scope" value="Bacteria"/>
</dbReference>
<dbReference type="HOGENOM" id="CLU_1676508_0_0_5"/>
<dbReference type="OrthoDB" id="7160291at2"/>
<dbReference type="Proteomes" id="UP000002480">
    <property type="component" value="Chromosome"/>
</dbReference>
<dbReference type="Gene3D" id="3.30.160.150">
    <property type="entry name" value="Lipoprotein like domain"/>
    <property type="match status" value="1"/>
</dbReference>
<accession>Q9ZDX6</accession>
<name>Y188_RICPR</name>
<reference key="1">
    <citation type="journal article" date="1998" name="Nature">
        <title>The genome sequence of Rickettsia prowazekii and the origin of mitochondria.</title>
        <authorList>
            <person name="Andersson S.G.E."/>
            <person name="Zomorodipour A."/>
            <person name="Andersson J.O."/>
            <person name="Sicheritz-Ponten T."/>
            <person name="Alsmark U.C.M."/>
            <person name="Podowski R.M."/>
            <person name="Naeslund A.K."/>
            <person name="Eriksson A.-S."/>
            <person name="Winkler H.H."/>
            <person name="Kurland C.G."/>
        </authorList>
    </citation>
    <scope>NUCLEOTIDE SEQUENCE [LARGE SCALE GENOMIC DNA]</scope>
    <source>
        <strain>Madrid E</strain>
    </source>
</reference>
<keyword id="KW-1185">Reference proteome</keyword>
<gene>
    <name type="ordered locus">RP188</name>
</gene>
<proteinExistence type="predicted"/>
<sequence>MHFLFLIILCCLISSCNLKSVYSEKYSRNKDLEAITVEPIRTIEGAEFYNRLTRLLPQKAKAKYLLKAELSVTTMPATIEKNSNVLREDINQLVRYKLIDIESQKILIEEKFCQNTSYNAIFTPYATNVERYGTGIGLAYQAAEEIRSRLILYFIRK</sequence>
<protein>
    <recommendedName>
        <fullName>Uncharacterized protein RP188</fullName>
    </recommendedName>
</protein>